<evidence type="ECO:0000255" key="1">
    <source>
        <dbReference type="HAMAP-Rule" id="MF_00551"/>
    </source>
</evidence>
<feature type="chain" id="PRO_0000164505" description="Uridine kinase">
    <location>
        <begin position="1"/>
        <end position="207"/>
    </location>
</feature>
<feature type="binding site" evidence="1">
    <location>
        <begin position="13"/>
        <end position="20"/>
    </location>
    <ligand>
        <name>ATP</name>
        <dbReference type="ChEBI" id="CHEBI:30616"/>
    </ligand>
</feature>
<sequence length="207" mass="24178">MNTKSPILILIAGASGSGKTTFANEIIARIPKNTTSVVICQDSYYISNSQLNKKERRLINYDHPSSFEWELMREQLSDIKKRKKIKVPIYDYKTEIRLDKTIDISDVDVIVLEGIYAIYDDVINQIADLKIFIETPKDECLIRRILRDVNERNRSFESVITQWRSTVSPMYDQFVEPSKKNANVSVLWNEHNRVALHLIHKWINNIH</sequence>
<organism>
    <name type="scientific">Ureaplasma parvum serovar 3 (strain ATCC 700970)</name>
    <dbReference type="NCBI Taxonomy" id="273119"/>
    <lineage>
        <taxon>Bacteria</taxon>
        <taxon>Bacillati</taxon>
        <taxon>Mycoplasmatota</taxon>
        <taxon>Mycoplasmoidales</taxon>
        <taxon>Mycoplasmoidaceae</taxon>
        <taxon>Ureaplasma</taxon>
    </lineage>
</organism>
<gene>
    <name evidence="1" type="primary">udk</name>
    <name type="ordered locus">UU332</name>
</gene>
<dbReference type="EC" id="2.7.1.48" evidence="1"/>
<dbReference type="EMBL" id="AF222894">
    <property type="protein sequence ID" value="AAF30741.1"/>
    <property type="molecule type" value="Genomic_DNA"/>
</dbReference>
<dbReference type="RefSeq" id="WP_006688441.1">
    <property type="nucleotide sequence ID" value="NC_002162.1"/>
</dbReference>
<dbReference type="SMR" id="Q9PQF9"/>
<dbReference type="STRING" id="273119.UU332"/>
<dbReference type="EnsemblBacteria" id="AAF30741">
    <property type="protein sequence ID" value="AAF30741"/>
    <property type="gene ID" value="UU332"/>
</dbReference>
<dbReference type="GeneID" id="29672380"/>
<dbReference type="KEGG" id="uur:UU332"/>
<dbReference type="eggNOG" id="COG0572">
    <property type="taxonomic scope" value="Bacteria"/>
</dbReference>
<dbReference type="HOGENOM" id="CLU_021278_1_2_14"/>
<dbReference type="OrthoDB" id="9777642at2"/>
<dbReference type="UniPathway" id="UPA00574">
    <property type="reaction ID" value="UER00637"/>
</dbReference>
<dbReference type="UniPathway" id="UPA00579">
    <property type="reaction ID" value="UER00640"/>
</dbReference>
<dbReference type="Proteomes" id="UP000000423">
    <property type="component" value="Chromosome"/>
</dbReference>
<dbReference type="GO" id="GO:0005737">
    <property type="term" value="C:cytoplasm"/>
    <property type="evidence" value="ECO:0007669"/>
    <property type="project" value="UniProtKB-SubCell"/>
</dbReference>
<dbReference type="GO" id="GO:0005524">
    <property type="term" value="F:ATP binding"/>
    <property type="evidence" value="ECO:0007669"/>
    <property type="project" value="UniProtKB-UniRule"/>
</dbReference>
<dbReference type="GO" id="GO:0043771">
    <property type="term" value="F:cytidine kinase activity"/>
    <property type="evidence" value="ECO:0007669"/>
    <property type="project" value="RHEA"/>
</dbReference>
<dbReference type="GO" id="GO:0004849">
    <property type="term" value="F:uridine kinase activity"/>
    <property type="evidence" value="ECO:0007669"/>
    <property type="project" value="UniProtKB-UniRule"/>
</dbReference>
<dbReference type="GO" id="GO:0044211">
    <property type="term" value="P:CTP salvage"/>
    <property type="evidence" value="ECO:0007669"/>
    <property type="project" value="UniProtKB-UniRule"/>
</dbReference>
<dbReference type="GO" id="GO:0044206">
    <property type="term" value="P:UMP salvage"/>
    <property type="evidence" value="ECO:0007669"/>
    <property type="project" value="UniProtKB-UniRule"/>
</dbReference>
<dbReference type="CDD" id="cd02023">
    <property type="entry name" value="UMPK"/>
    <property type="match status" value="1"/>
</dbReference>
<dbReference type="Gene3D" id="3.40.50.300">
    <property type="entry name" value="P-loop containing nucleotide triphosphate hydrolases"/>
    <property type="match status" value="1"/>
</dbReference>
<dbReference type="HAMAP" id="MF_00551">
    <property type="entry name" value="Uridine_kinase"/>
    <property type="match status" value="1"/>
</dbReference>
<dbReference type="InterPro" id="IPR027417">
    <property type="entry name" value="P-loop_NTPase"/>
</dbReference>
<dbReference type="InterPro" id="IPR006083">
    <property type="entry name" value="PRK/URK"/>
</dbReference>
<dbReference type="InterPro" id="IPR026008">
    <property type="entry name" value="Uridine_kinase"/>
</dbReference>
<dbReference type="InterPro" id="IPR000764">
    <property type="entry name" value="Uridine_kinase-like"/>
</dbReference>
<dbReference type="NCBIfam" id="NF004018">
    <property type="entry name" value="PRK05480.1"/>
    <property type="match status" value="1"/>
</dbReference>
<dbReference type="NCBIfam" id="TIGR00235">
    <property type="entry name" value="udk"/>
    <property type="match status" value="1"/>
</dbReference>
<dbReference type="PANTHER" id="PTHR10285">
    <property type="entry name" value="URIDINE KINASE"/>
    <property type="match status" value="1"/>
</dbReference>
<dbReference type="Pfam" id="PF00485">
    <property type="entry name" value="PRK"/>
    <property type="match status" value="1"/>
</dbReference>
<dbReference type="PRINTS" id="PR00988">
    <property type="entry name" value="URIDINKINASE"/>
</dbReference>
<dbReference type="SUPFAM" id="SSF52540">
    <property type="entry name" value="P-loop containing nucleoside triphosphate hydrolases"/>
    <property type="match status" value="1"/>
</dbReference>
<reference key="1">
    <citation type="journal article" date="2000" name="Nature">
        <title>The complete sequence of the mucosal pathogen Ureaplasma urealyticum.</title>
        <authorList>
            <person name="Glass J.I."/>
            <person name="Lefkowitz E.J."/>
            <person name="Glass J.S."/>
            <person name="Heiner C.R."/>
            <person name="Chen E.Y."/>
            <person name="Cassell G.H."/>
        </authorList>
    </citation>
    <scope>NUCLEOTIDE SEQUENCE [LARGE SCALE GENOMIC DNA]</scope>
    <source>
        <strain>ATCC 700970</strain>
    </source>
</reference>
<keyword id="KW-0067">ATP-binding</keyword>
<keyword id="KW-0963">Cytoplasm</keyword>
<keyword id="KW-0418">Kinase</keyword>
<keyword id="KW-0547">Nucleotide-binding</keyword>
<keyword id="KW-1185">Reference proteome</keyword>
<keyword id="KW-0808">Transferase</keyword>
<protein>
    <recommendedName>
        <fullName evidence="1">Uridine kinase</fullName>
        <ecNumber evidence="1">2.7.1.48</ecNumber>
    </recommendedName>
    <alternativeName>
        <fullName evidence="1">Cytidine monophosphokinase</fullName>
    </alternativeName>
    <alternativeName>
        <fullName evidence="1">Uridine monophosphokinase</fullName>
    </alternativeName>
</protein>
<name>URK_UREPA</name>
<comment type="catalytic activity">
    <reaction evidence="1">
        <text>uridine + ATP = UMP + ADP + H(+)</text>
        <dbReference type="Rhea" id="RHEA:16825"/>
        <dbReference type="ChEBI" id="CHEBI:15378"/>
        <dbReference type="ChEBI" id="CHEBI:16704"/>
        <dbReference type="ChEBI" id="CHEBI:30616"/>
        <dbReference type="ChEBI" id="CHEBI:57865"/>
        <dbReference type="ChEBI" id="CHEBI:456216"/>
        <dbReference type="EC" id="2.7.1.48"/>
    </reaction>
</comment>
<comment type="catalytic activity">
    <reaction evidence="1">
        <text>cytidine + ATP = CMP + ADP + H(+)</text>
        <dbReference type="Rhea" id="RHEA:24674"/>
        <dbReference type="ChEBI" id="CHEBI:15378"/>
        <dbReference type="ChEBI" id="CHEBI:17562"/>
        <dbReference type="ChEBI" id="CHEBI:30616"/>
        <dbReference type="ChEBI" id="CHEBI:60377"/>
        <dbReference type="ChEBI" id="CHEBI:456216"/>
        <dbReference type="EC" id="2.7.1.48"/>
    </reaction>
</comment>
<comment type="pathway">
    <text evidence="1">Pyrimidine metabolism; CTP biosynthesis via salvage pathway; CTP from cytidine: step 1/3.</text>
</comment>
<comment type="pathway">
    <text evidence="1">Pyrimidine metabolism; UMP biosynthesis via salvage pathway; UMP from uridine: step 1/1.</text>
</comment>
<comment type="subcellular location">
    <subcellularLocation>
        <location evidence="1">Cytoplasm</location>
    </subcellularLocation>
</comment>
<comment type="similarity">
    <text evidence="1">Belongs to the uridine kinase family.</text>
</comment>
<proteinExistence type="inferred from homology"/>
<accession>Q9PQF9</accession>